<feature type="chain" id="PRO_0000121465" description="DNA-directed RNA polymerase I subunit RPA12">
    <location>
        <begin position="1"/>
        <end position="125"/>
    </location>
</feature>
<feature type="zinc finger region" description="C4-type">
    <location>
        <begin position="10"/>
        <end position="33"/>
    </location>
</feature>
<feature type="zinc finger region" description="TFIIS-type" evidence="1 9 10">
    <location>
        <begin position="82"/>
        <end position="122"/>
    </location>
</feature>
<feature type="region of interest" description="Necessary and sufficient for recruitment into Pol I">
    <location>
        <begin position="1"/>
        <end position="69"/>
    </location>
</feature>
<feature type="region of interest" description="Interaction with RPA2" evidence="3">
    <location>
        <begin position="1"/>
        <end position="60"/>
    </location>
</feature>
<feature type="region of interest" description="Required for RNA cleavage, but not essential for elongation activity">
    <location>
        <begin position="79"/>
        <end position="125"/>
    </location>
</feature>
<feature type="binding site" evidence="2">
    <location>
        <position position="10"/>
    </location>
    <ligand>
        <name>Zn(2+)</name>
        <dbReference type="ChEBI" id="CHEBI:29105"/>
        <label>1</label>
    </ligand>
</feature>
<feature type="binding site" evidence="2">
    <location>
        <position position="13"/>
    </location>
    <ligand>
        <name>Zn(2+)</name>
        <dbReference type="ChEBI" id="CHEBI:29105"/>
        <label>1</label>
    </ligand>
</feature>
<feature type="binding site" evidence="2">
    <location>
        <position position="30"/>
    </location>
    <ligand>
        <name>Zn(2+)</name>
        <dbReference type="ChEBI" id="CHEBI:29105"/>
        <label>1</label>
    </ligand>
</feature>
<feature type="binding site" evidence="2">
    <location>
        <position position="33"/>
    </location>
    <ligand>
        <name>Zn(2+)</name>
        <dbReference type="ChEBI" id="CHEBI:29105"/>
        <label>1</label>
    </ligand>
</feature>
<feature type="binding site" evidence="1">
    <location>
        <position position="86"/>
    </location>
    <ligand>
        <name>Zn(2+)</name>
        <dbReference type="ChEBI" id="CHEBI:29105"/>
        <label>2</label>
    </ligand>
</feature>
<feature type="binding site" evidence="1">
    <location>
        <position position="89"/>
    </location>
    <ligand>
        <name>Zn(2+)</name>
        <dbReference type="ChEBI" id="CHEBI:29105"/>
        <label>2</label>
    </ligand>
</feature>
<feature type="binding site" evidence="1">
    <location>
        <position position="114"/>
    </location>
    <ligand>
        <name>Zn(2+)</name>
        <dbReference type="ChEBI" id="CHEBI:29105"/>
        <label>2</label>
    </ligand>
</feature>
<feature type="binding site" evidence="1">
    <location>
        <position position="117"/>
    </location>
    <ligand>
        <name>Zn(2+)</name>
        <dbReference type="ChEBI" id="CHEBI:29105"/>
        <label>2</label>
    </ligand>
</feature>
<feature type="mutagenesis site" description="Severe growth defect." evidence="3">
    <original>C</original>
    <variation>S</variation>
    <location>
        <position position="10"/>
    </location>
</feature>
<feature type="mutagenesis site" description="No effect." evidence="3">
    <original>C</original>
    <variation>S</variation>
    <location>
        <position position="13"/>
    </location>
</feature>
<feature type="mutagenesis site" description="Limited growth defect." evidence="3">
    <original>C</original>
    <variation>S</variation>
    <location>
        <position position="30"/>
    </location>
</feature>
<feature type="mutagenesis site" description="No effect." evidence="3">
    <original>C</original>
    <variation>S</variation>
    <location>
        <position position="33"/>
    </location>
</feature>
<feature type="strand" evidence="13">
    <location>
        <begin position="7"/>
        <end position="9"/>
    </location>
</feature>
<feature type="turn" evidence="13">
    <location>
        <begin position="11"/>
        <end position="13"/>
    </location>
</feature>
<feature type="helix" evidence="12">
    <location>
        <begin position="20"/>
        <end position="22"/>
    </location>
</feature>
<feature type="strand" evidence="13">
    <location>
        <begin position="24"/>
        <end position="26"/>
    </location>
</feature>
<feature type="strand" evidence="13">
    <location>
        <begin position="31"/>
        <end position="33"/>
    </location>
</feature>
<feature type="strand" evidence="13">
    <location>
        <begin position="37"/>
        <end position="39"/>
    </location>
</feature>
<feature type="strand" evidence="13">
    <location>
        <begin position="47"/>
        <end position="50"/>
    </location>
</feature>
<feature type="helix" evidence="12">
    <location>
        <begin position="53"/>
        <end position="55"/>
    </location>
</feature>
<feature type="helix" evidence="13">
    <location>
        <begin position="59"/>
        <end position="62"/>
    </location>
</feature>
<feature type="strand" evidence="12">
    <location>
        <begin position="65"/>
        <end position="67"/>
    </location>
</feature>
<feature type="strand" evidence="15">
    <location>
        <begin position="73"/>
        <end position="75"/>
    </location>
</feature>
<feature type="strand" evidence="12">
    <location>
        <begin position="79"/>
        <end position="83"/>
    </location>
</feature>
<feature type="strand" evidence="13">
    <location>
        <begin position="88"/>
        <end position="90"/>
    </location>
</feature>
<feature type="strand" evidence="13">
    <location>
        <begin position="93"/>
        <end position="95"/>
    </location>
</feature>
<feature type="strand" evidence="13">
    <location>
        <begin position="102"/>
        <end position="106"/>
    </location>
</feature>
<feature type="strand" evidence="14">
    <location>
        <begin position="109"/>
        <end position="111"/>
    </location>
</feature>
<feature type="strand" evidence="13">
    <location>
        <begin position="113"/>
        <end position="117"/>
    </location>
</feature>
<feature type="strand" evidence="12">
    <location>
        <begin position="120"/>
        <end position="123"/>
    </location>
</feature>
<organism>
    <name type="scientific">Saccharomyces cerevisiae (strain ATCC 204508 / S288c)</name>
    <name type="common">Baker's yeast</name>
    <dbReference type="NCBI Taxonomy" id="559292"/>
    <lineage>
        <taxon>Eukaryota</taxon>
        <taxon>Fungi</taxon>
        <taxon>Dikarya</taxon>
        <taxon>Ascomycota</taxon>
        <taxon>Saccharomycotina</taxon>
        <taxon>Saccharomycetes</taxon>
        <taxon>Saccharomycetales</taxon>
        <taxon>Saccharomycetaceae</taxon>
        <taxon>Saccharomyces</taxon>
    </lineage>
</organism>
<dbReference type="EMBL" id="L00708">
    <property type="protein sequence ID" value="AAA34992.1"/>
    <property type="molecule type" value="Genomic_DNA"/>
</dbReference>
<dbReference type="EMBL" id="L35564">
    <property type="protein sequence ID" value="AAB59319.1"/>
    <property type="molecule type" value="Genomic_DNA"/>
</dbReference>
<dbReference type="EMBL" id="Z49563">
    <property type="protein sequence ID" value="CAA89591.1"/>
    <property type="molecule type" value="Genomic_DNA"/>
</dbReference>
<dbReference type="EMBL" id="L47993">
    <property type="protein sequence ID" value="AAB39289.1"/>
    <property type="molecule type" value="Genomic_DNA"/>
</dbReference>
<dbReference type="EMBL" id="AY558313">
    <property type="protein sequence ID" value="AAS56639.1"/>
    <property type="molecule type" value="Genomic_DNA"/>
</dbReference>
<dbReference type="EMBL" id="BK006943">
    <property type="protein sequence ID" value="DAA08850.1"/>
    <property type="molecule type" value="Genomic_DNA"/>
</dbReference>
<dbReference type="PIR" id="A48107">
    <property type="entry name" value="A48107"/>
</dbReference>
<dbReference type="RefSeq" id="NP_012597.1">
    <property type="nucleotide sequence ID" value="NM_001181721.1"/>
</dbReference>
<dbReference type="PDB" id="4C2M">
    <property type="method" value="X-ray"/>
    <property type="resolution" value="2.80 A"/>
    <property type="chains" value="I/X=1-125"/>
</dbReference>
<dbReference type="PDB" id="4C3H">
    <property type="method" value="X-ray"/>
    <property type="resolution" value="3.27 A"/>
    <property type="chains" value="I=1-125"/>
</dbReference>
<dbReference type="PDB" id="4C3I">
    <property type="method" value="X-ray"/>
    <property type="resolution" value="3.00 A"/>
    <property type="chains" value="I=1-125"/>
</dbReference>
<dbReference type="PDB" id="4C3J">
    <property type="method" value="X-ray"/>
    <property type="resolution" value="3.35 A"/>
    <property type="chains" value="I=1-125"/>
</dbReference>
<dbReference type="PDB" id="4YM7">
    <property type="method" value="X-ray"/>
    <property type="resolution" value="5.50 A"/>
    <property type="chains" value="AI/BI/CI/DI/EI/FI=1-125"/>
</dbReference>
<dbReference type="PDB" id="5G5L">
    <property type="method" value="EM"/>
    <property type="resolution" value="4.80 A"/>
    <property type="chains" value="I=1-125"/>
</dbReference>
<dbReference type="PDB" id="5LMX">
    <property type="method" value="EM"/>
    <property type="resolution" value="4.90 A"/>
    <property type="chains" value="I=1-125"/>
</dbReference>
<dbReference type="PDB" id="5M3F">
    <property type="method" value="EM"/>
    <property type="resolution" value="3.80 A"/>
    <property type="chains" value="I=1-125"/>
</dbReference>
<dbReference type="PDB" id="5M3M">
    <property type="method" value="EM"/>
    <property type="resolution" value="4.00 A"/>
    <property type="chains" value="I=1-125"/>
</dbReference>
<dbReference type="PDB" id="5M5W">
    <property type="method" value="EM"/>
    <property type="resolution" value="3.80 A"/>
    <property type="chains" value="I=1-125"/>
</dbReference>
<dbReference type="PDB" id="5M5X">
    <property type="method" value="EM"/>
    <property type="resolution" value="4.00 A"/>
    <property type="chains" value="I=1-125"/>
</dbReference>
<dbReference type="PDB" id="5M5Y">
    <property type="method" value="EM"/>
    <property type="resolution" value="4.00 A"/>
    <property type="chains" value="I=1-125"/>
</dbReference>
<dbReference type="PDB" id="5M64">
    <property type="method" value="EM"/>
    <property type="resolution" value="4.60 A"/>
    <property type="chains" value="I=1-125"/>
</dbReference>
<dbReference type="PDB" id="5N5Y">
    <property type="method" value="EM"/>
    <property type="resolution" value="7.70 A"/>
    <property type="chains" value="I=1-125"/>
</dbReference>
<dbReference type="PDB" id="5N5Z">
    <property type="method" value="EM"/>
    <property type="resolution" value="7.70 A"/>
    <property type="chains" value="I=1-125"/>
</dbReference>
<dbReference type="PDB" id="5N60">
    <property type="method" value="EM"/>
    <property type="resolution" value="7.70 A"/>
    <property type="chains" value="I=1-125"/>
</dbReference>
<dbReference type="PDB" id="5N61">
    <property type="method" value="EM"/>
    <property type="resolution" value="3.40 A"/>
    <property type="chains" value="I=1-125"/>
</dbReference>
<dbReference type="PDB" id="5OA1">
    <property type="method" value="EM"/>
    <property type="resolution" value="4.40 A"/>
    <property type="chains" value="I=1-125"/>
</dbReference>
<dbReference type="PDB" id="5W5Y">
    <property type="method" value="EM"/>
    <property type="resolution" value="3.80 A"/>
    <property type="chains" value="I=1-125"/>
</dbReference>
<dbReference type="PDB" id="5W64">
    <property type="method" value="EM"/>
    <property type="resolution" value="4.20 A"/>
    <property type="chains" value="I=1-125"/>
</dbReference>
<dbReference type="PDB" id="5W65">
    <property type="method" value="EM"/>
    <property type="resolution" value="4.30 A"/>
    <property type="chains" value="I=1-125"/>
</dbReference>
<dbReference type="PDB" id="5W66">
    <property type="method" value="EM"/>
    <property type="resolution" value="3.90 A"/>
    <property type="chains" value="I=1-125"/>
</dbReference>
<dbReference type="PDB" id="6H67">
    <property type="method" value="EM"/>
    <property type="resolution" value="3.60 A"/>
    <property type="chains" value="I=1-125"/>
</dbReference>
<dbReference type="PDB" id="6H68">
    <property type="method" value="EM"/>
    <property type="resolution" value="4.60 A"/>
    <property type="chains" value="I=1-125"/>
</dbReference>
<dbReference type="PDB" id="6HKO">
    <property type="method" value="EM"/>
    <property type="resolution" value="3.42 A"/>
    <property type="chains" value="I=1-125"/>
</dbReference>
<dbReference type="PDB" id="6HLQ">
    <property type="method" value="EM"/>
    <property type="resolution" value="3.18 A"/>
    <property type="chains" value="I=1-125"/>
</dbReference>
<dbReference type="PDB" id="6HLR">
    <property type="method" value="EM"/>
    <property type="resolution" value="3.18 A"/>
    <property type="chains" value="I=1-125"/>
</dbReference>
<dbReference type="PDB" id="6HLS">
    <property type="method" value="EM"/>
    <property type="resolution" value="3.21 A"/>
    <property type="chains" value="I=1-125"/>
</dbReference>
<dbReference type="PDB" id="6RQH">
    <property type="method" value="EM"/>
    <property type="resolution" value="3.70 A"/>
    <property type="chains" value="I=1-125"/>
</dbReference>
<dbReference type="PDB" id="6RQL">
    <property type="method" value="EM"/>
    <property type="resolution" value="2.90 A"/>
    <property type="chains" value="I=1-125"/>
</dbReference>
<dbReference type="PDB" id="6RQT">
    <property type="method" value="EM"/>
    <property type="resolution" value="4.00 A"/>
    <property type="chains" value="I=1-125"/>
</dbReference>
<dbReference type="PDB" id="6RRD">
    <property type="method" value="EM"/>
    <property type="resolution" value="3.10 A"/>
    <property type="chains" value="I=1-125"/>
</dbReference>
<dbReference type="PDB" id="6RUI">
    <property type="method" value="EM"/>
    <property type="resolution" value="2.70 A"/>
    <property type="chains" value="I=1-125"/>
</dbReference>
<dbReference type="PDB" id="6RUO">
    <property type="method" value="EM"/>
    <property type="resolution" value="3.50 A"/>
    <property type="chains" value="I=1-125"/>
</dbReference>
<dbReference type="PDB" id="6RWE">
    <property type="method" value="EM"/>
    <property type="resolution" value="3.00 A"/>
    <property type="chains" value="I=1-125"/>
</dbReference>
<dbReference type="PDB" id="6TPS">
    <property type="method" value="EM"/>
    <property type="resolution" value="3.54 A"/>
    <property type="chains" value="I=1-125"/>
</dbReference>
<dbReference type="PDBsum" id="4C2M"/>
<dbReference type="PDBsum" id="4C3H"/>
<dbReference type="PDBsum" id="4C3I"/>
<dbReference type="PDBsum" id="4C3J"/>
<dbReference type="PDBsum" id="4YM7"/>
<dbReference type="PDBsum" id="5G5L"/>
<dbReference type="PDBsum" id="5LMX"/>
<dbReference type="PDBsum" id="5M3F"/>
<dbReference type="PDBsum" id="5M3M"/>
<dbReference type="PDBsum" id="5M5W"/>
<dbReference type="PDBsum" id="5M5X"/>
<dbReference type="PDBsum" id="5M5Y"/>
<dbReference type="PDBsum" id="5M64"/>
<dbReference type="PDBsum" id="5N5Y"/>
<dbReference type="PDBsum" id="5N5Z"/>
<dbReference type="PDBsum" id="5N60"/>
<dbReference type="PDBsum" id="5N61"/>
<dbReference type="PDBsum" id="5OA1"/>
<dbReference type="PDBsum" id="5W5Y"/>
<dbReference type="PDBsum" id="5W64"/>
<dbReference type="PDBsum" id="5W65"/>
<dbReference type="PDBsum" id="5W66"/>
<dbReference type="PDBsum" id="6H67"/>
<dbReference type="PDBsum" id="6H68"/>
<dbReference type="PDBsum" id="6HKO"/>
<dbReference type="PDBsum" id="6HLQ"/>
<dbReference type="PDBsum" id="6HLR"/>
<dbReference type="PDBsum" id="6HLS"/>
<dbReference type="PDBsum" id="6RQH"/>
<dbReference type="PDBsum" id="6RQL"/>
<dbReference type="PDBsum" id="6RQT"/>
<dbReference type="PDBsum" id="6RRD"/>
<dbReference type="PDBsum" id="6RUI"/>
<dbReference type="PDBsum" id="6RUO"/>
<dbReference type="PDBsum" id="6RWE"/>
<dbReference type="PDBsum" id="6TPS"/>
<dbReference type="EMDB" id="EMD-0146"/>
<dbReference type="EMDB" id="EMD-0147"/>
<dbReference type="EMDB" id="EMD-0238"/>
<dbReference type="EMDB" id="EMD-0239"/>
<dbReference type="EMDB" id="EMD-0240"/>
<dbReference type="EMDB" id="EMD-0241"/>
<dbReference type="EMDB" id="EMD-10006"/>
<dbReference type="EMDB" id="EMD-10007"/>
<dbReference type="EMDB" id="EMD-10038"/>
<dbReference type="EMDB" id="EMD-10544"/>
<dbReference type="EMDB" id="EMD-3446"/>
<dbReference type="EMDB" id="EMD-3447"/>
<dbReference type="EMDB" id="EMD-3448"/>
<dbReference type="EMDB" id="EMD-3449"/>
<dbReference type="EMDB" id="EMD-3590"/>
<dbReference type="EMDB" id="EMD-3591"/>
<dbReference type="EMDB" id="EMD-3592"/>
<dbReference type="EMDB" id="EMD-3593"/>
<dbReference type="EMDB" id="EMD-3727"/>
<dbReference type="EMDB" id="EMD-4088"/>
<dbReference type="EMDB" id="EMD-4147"/>
<dbReference type="EMDB" id="EMD-4148"/>
<dbReference type="EMDB" id="EMD-4982"/>
<dbReference type="EMDB" id="EMD-4984"/>
<dbReference type="EMDB" id="EMD-4985"/>
<dbReference type="EMDB" id="EMD-4987"/>
<dbReference type="EMDB" id="EMD-8771"/>
<dbReference type="EMDB" id="EMD-8773"/>
<dbReference type="EMDB" id="EMD-8774"/>
<dbReference type="EMDB" id="EMD-8775"/>
<dbReference type="EMDB" id="EMD-8776"/>
<dbReference type="EMDB" id="EMD-8777"/>
<dbReference type="SMR" id="P32529"/>
<dbReference type="BioGRID" id="33820">
    <property type="interactions" value="85"/>
</dbReference>
<dbReference type="ComplexPortal" id="CPX-1664">
    <property type="entry name" value="DNA-directed RNA Polymerase I complex"/>
</dbReference>
<dbReference type="DIP" id="DIP-236N"/>
<dbReference type="FunCoup" id="P32529">
    <property type="interactions" value="856"/>
</dbReference>
<dbReference type="IntAct" id="P32529">
    <property type="interactions" value="34"/>
</dbReference>
<dbReference type="MINT" id="P32529"/>
<dbReference type="STRING" id="4932.YJR063W"/>
<dbReference type="iPTMnet" id="P32529"/>
<dbReference type="PaxDb" id="4932-YJR063W"/>
<dbReference type="PeptideAtlas" id="P32529"/>
<dbReference type="EnsemblFungi" id="YJR063W_mRNA">
    <property type="protein sequence ID" value="YJR063W"/>
    <property type="gene ID" value="YJR063W"/>
</dbReference>
<dbReference type="GeneID" id="853526"/>
<dbReference type="KEGG" id="sce:YJR063W"/>
<dbReference type="AGR" id="SGD:S000003824"/>
<dbReference type="SGD" id="S000003824">
    <property type="gene designation" value="RPA12"/>
</dbReference>
<dbReference type="VEuPathDB" id="FungiDB:YJR063W"/>
<dbReference type="eggNOG" id="KOG2907">
    <property type="taxonomic scope" value="Eukaryota"/>
</dbReference>
<dbReference type="GeneTree" id="ENSGT00390000008126"/>
<dbReference type="HOGENOM" id="CLU_093932_1_1_1"/>
<dbReference type="InParanoid" id="P32529"/>
<dbReference type="OMA" id="EMQYHTL"/>
<dbReference type="OrthoDB" id="10056816at2759"/>
<dbReference type="BioCyc" id="YEAST:G3O-31696-MONOMER"/>
<dbReference type="Reactome" id="R-SCE-73762">
    <property type="pathway name" value="RNA Polymerase I Transcription Initiation"/>
</dbReference>
<dbReference type="Reactome" id="R-SCE-73772">
    <property type="pathway name" value="RNA Polymerase I Promoter Escape"/>
</dbReference>
<dbReference type="BioGRID-ORCS" id="853526">
    <property type="hits" value="1 hit in 10 CRISPR screens"/>
</dbReference>
<dbReference type="EvolutionaryTrace" id="P32529"/>
<dbReference type="PRO" id="PR:P32529"/>
<dbReference type="Proteomes" id="UP000002311">
    <property type="component" value="Chromosome X"/>
</dbReference>
<dbReference type="RNAct" id="P32529">
    <property type="molecule type" value="protein"/>
</dbReference>
<dbReference type="GO" id="GO:0005634">
    <property type="term" value="C:nucleus"/>
    <property type="evidence" value="ECO:0000314"/>
    <property type="project" value="ComplexPortal"/>
</dbReference>
<dbReference type="GO" id="GO:0005736">
    <property type="term" value="C:RNA polymerase I complex"/>
    <property type="evidence" value="ECO:0000314"/>
    <property type="project" value="UniProtKB"/>
</dbReference>
<dbReference type="GO" id="GO:0003899">
    <property type="term" value="F:DNA-directed RNA polymerase activity"/>
    <property type="evidence" value="ECO:0000314"/>
    <property type="project" value="UniProtKB"/>
</dbReference>
<dbReference type="GO" id="GO:0003676">
    <property type="term" value="F:nucleic acid binding"/>
    <property type="evidence" value="ECO:0007669"/>
    <property type="project" value="InterPro"/>
</dbReference>
<dbReference type="GO" id="GO:0061629">
    <property type="term" value="F:RNA polymerase II-specific DNA-binding transcription factor binding"/>
    <property type="evidence" value="ECO:0000353"/>
    <property type="project" value="SGD"/>
</dbReference>
<dbReference type="GO" id="GO:0008270">
    <property type="term" value="F:zinc ion binding"/>
    <property type="evidence" value="ECO:0007669"/>
    <property type="project" value="UniProtKB-KW"/>
</dbReference>
<dbReference type="GO" id="GO:0000122">
    <property type="term" value="P:negative regulation of transcription by RNA polymerase II"/>
    <property type="evidence" value="ECO:0000315"/>
    <property type="project" value="SGD"/>
</dbReference>
<dbReference type="GO" id="GO:0042790">
    <property type="term" value="P:nucleolar large rRNA transcription by RNA polymerase I"/>
    <property type="evidence" value="ECO:0000314"/>
    <property type="project" value="ComplexPortal"/>
</dbReference>
<dbReference type="GO" id="GO:0042254">
    <property type="term" value="P:ribosome biogenesis"/>
    <property type="evidence" value="ECO:0007669"/>
    <property type="project" value="UniProtKB-KW"/>
</dbReference>
<dbReference type="GO" id="GO:0006363">
    <property type="term" value="P:termination of RNA polymerase I transcription"/>
    <property type="evidence" value="ECO:0000314"/>
    <property type="project" value="ComplexPortal"/>
</dbReference>
<dbReference type="GO" id="GO:0006360">
    <property type="term" value="P:transcription by RNA polymerase I"/>
    <property type="evidence" value="ECO:0000314"/>
    <property type="project" value="UniProtKB"/>
</dbReference>
<dbReference type="GO" id="GO:0006362">
    <property type="term" value="P:transcription elongation by RNA polymerase I"/>
    <property type="evidence" value="ECO:0000314"/>
    <property type="project" value="ComplexPortal"/>
</dbReference>
<dbReference type="GO" id="GO:0006361">
    <property type="term" value="P:transcription initiation at RNA polymerase I promoter"/>
    <property type="evidence" value="ECO:0000314"/>
    <property type="project" value="ComplexPortal"/>
</dbReference>
<dbReference type="CDD" id="cd10507">
    <property type="entry name" value="Zn-ribbon_RPA12"/>
    <property type="match status" value="1"/>
</dbReference>
<dbReference type="FunFam" id="2.20.25.10:FF:000019">
    <property type="entry name" value="DNA-directed RNA polymerase subunit"/>
    <property type="match status" value="1"/>
</dbReference>
<dbReference type="Gene3D" id="2.20.25.10">
    <property type="match status" value="1"/>
</dbReference>
<dbReference type="InterPro" id="IPR019761">
    <property type="entry name" value="DNA-dir_RNA_pol-M_15_CS"/>
</dbReference>
<dbReference type="InterPro" id="IPR012164">
    <property type="entry name" value="Rpa12/Rpb9/Rpc10/TFS"/>
</dbReference>
<dbReference type="InterPro" id="IPR034004">
    <property type="entry name" value="Zn_ribbon_RPA12_C"/>
</dbReference>
<dbReference type="InterPro" id="IPR001529">
    <property type="entry name" value="Zn_ribbon_RPB9"/>
</dbReference>
<dbReference type="InterPro" id="IPR001222">
    <property type="entry name" value="Znf_TFIIS"/>
</dbReference>
<dbReference type="PANTHER" id="PTHR11239">
    <property type="entry name" value="DNA-DIRECTED RNA POLYMERASE"/>
    <property type="match status" value="1"/>
</dbReference>
<dbReference type="PANTHER" id="PTHR11239:SF14">
    <property type="entry name" value="DNA-DIRECTED RNA POLYMERASE I SUBUNIT RPA12"/>
    <property type="match status" value="1"/>
</dbReference>
<dbReference type="Pfam" id="PF02150">
    <property type="entry name" value="Zn_ribbon_RPB9"/>
    <property type="match status" value="1"/>
</dbReference>
<dbReference type="Pfam" id="PF01096">
    <property type="entry name" value="Zn_ribbon_TFIIS"/>
    <property type="match status" value="1"/>
</dbReference>
<dbReference type="PIRSF" id="PIRSF005586">
    <property type="entry name" value="RNApol_RpoM"/>
    <property type="match status" value="1"/>
</dbReference>
<dbReference type="SMART" id="SM00661">
    <property type="entry name" value="RPOL9"/>
    <property type="match status" value="1"/>
</dbReference>
<dbReference type="SMART" id="SM00440">
    <property type="entry name" value="ZnF_C2C2"/>
    <property type="match status" value="1"/>
</dbReference>
<dbReference type="SUPFAM" id="SSF57783">
    <property type="entry name" value="Zinc beta-ribbon"/>
    <property type="match status" value="1"/>
</dbReference>
<dbReference type="PROSITE" id="PS01030">
    <property type="entry name" value="RNA_POL_M_15KD"/>
    <property type="match status" value="1"/>
</dbReference>
<dbReference type="PROSITE" id="PS00466">
    <property type="entry name" value="ZF_TFIIS_1"/>
    <property type="match status" value="1"/>
</dbReference>
<dbReference type="PROSITE" id="PS51133">
    <property type="entry name" value="ZF_TFIIS_2"/>
    <property type="match status" value="1"/>
</dbReference>
<comment type="function">
    <text evidence="7 8 9 10">DNA-dependent RNA polymerases catalyze the transcription of DNA into RNA using the four ribonucleoside triphosphates as substrates. Component of RNA polymerase I (Pol I) which synthesizes ribosomal RNA precursors. Besides, RNA polymerase I has intrinsic RNA cleavage activity. Proposed to contribute to the polymerase catalytic activity and form the polymerase active center together with the two largest subunits. Subunit RPA12 contributes a catalytic zinc ribbon that is required for RNA cleavage by Pol I. Involved in transcriptional termination.</text>
</comment>
<comment type="subunit">
    <text evidence="3 4 8 9 10">Component of the RNA polymerase I (Pol I) complex consisting of 14 subunits: RPA135, RPA190, RPC40, RPA14, RPB5, RPO26, RPA43, RPB8, RPA12, RPB10, RPC19, RPC10, RPA49 and RPA34. The complex is composed of a horseshoe-shaped core containing ten subunits (RPA135, RPA190, RPB5, RPO26, RPB8, RPB10, RPC10, RPA12, RPC19 and RPC40) where RPA135 and RPA190 form the DNA-binding cleft. Outside of the core, RPA14 and RPA43 form the stalk that mediates interactions with transcription initiation factors and newly synthesized RNA. Interacts with RPA2/RPA135. Peripheral subunit that binds the catalytic zinc ion that is required for RNA cleavage. The heterodimer formed by RPA34 and RPA49 stabilizes subunit RPA12 and stimulates RPA12-dependent RNA cleavage. Involved in the recruitment of RPA49 to Pol I.</text>
</comment>
<comment type="subcellular location">
    <subcellularLocation>
        <location evidence="3 5">Nucleus</location>
        <location evidence="3 5">Nucleolus</location>
    </subcellularLocation>
</comment>
<comment type="miscellaneous">
    <text evidence="6">Present with 8450 molecules/cell in log phase SD medium.</text>
</comment>
<comment type="similarity">
    <text evidence="11">Belongs to the archaeal RpoM/eukaryotic RPA12/RPB9/RPC11 RNA polymerase family.</text>
</comment>
<accession>P32529</accession>
<accession>D6VWN4</accession>
<sequence>MSVVGSLIFCLDCGDLLENPNAVLGSNVECSQCKAIYPKSQFSNLKVVTTTADDAFPSSLRAKKSVVKTSLKKNELKDGATIKEKCPQCGNEEMNYHTLQLRSADEGATVFYTCTSCGYKFRTNN</sequence>
<keyword id="KW-0002">3D-structure</keyword>
<keyword id="KW-0903">Direct protein sequencing</keyword>
<keyword id="KW-0240">DNA-directed RNA polymerase</keyword>
<keyword id="KW-0479">Metal-binding</keyword>
<keyword id="KW-0539">Nucleus</keyword>
<keyword id="KW-1185">Reference proteome</keyword>
<keyword id="KW-0690">Ribosome biogenesis</keyword>
<keyword id="KW-0804">Transcription</keyword>
<keyword id="KW-0862">Zinc</keyword>
<keyword id="KW-0863">Zinc-finger</keyword>
<name>RPA12_YEAST</name>
<reference key="1">
    <citation type="journal article" date="1993" name="Mol. Cell. Biol.">
        <title>Gene RRN4 in Saccharomyces cerevisiae encodes the A12.2 subunit of RNA polymerase I and is essential only at high temperatures.</title>
        <authorList>
            <person name="Nogi Y."/>
            <person name="Yano R."/>
            <person name="Dodd J."/>
            <person name="Carles C."/>
            <person name="Nomura M."/>
        </authorList>
    </citation>
    <scope>NUCLEOTIDE SEQUENCE [GENOMIC DNA]</scope>
    <scope>PARTIAL PROTEIN SEQUENCE</scope>
</reference>
<reference key="2">
    <citation type="journal article" date="1996" name="Yeast">
        <title>Analysis of a 62 kb DNA sequence of chromosome X reveals 36 open reading frames and a gene cluster with a counterpart on chromosome XI.</title>
        <authorList>
            <person name="Huang M.-E."/>
            <person name="Manus V."/>
            <person name="Chuat J.-C."/>
            <person name="Galibert F."/>
        </authorList>
    </citation>
    <scope>NUCLEOTIDE SEQUENCE [GENOMIC DNA]</scope>
    <source>
        <strain>ATCC 204508 / S288c</strain>
    </source>
</reference>
<reference key="3">
    <citation type="journal article" date="1996" name="EMBO J.">
        <title>Complete nucleotide sequence of Saccharomyces cerevisiae chromosome X.</title>
        <authorList>
            <person name="Galibert F."/>
            <person name="Alexandraki D."/>
            <person name="Baur A."/>
            <person name="Boles E."/>
            <person name="Chalwatzis N."/>
            <person name="Chuat J.-C."/>
            <person name="Coster F."/>
            <person name="Cziepluch C."/>
            <person name="de Haan M."/>
            <person name="Domdey H."/>
            <person name="Durand P."/>
            <person name="Entian K.-D."/>
            <person name="Gatius M."/>
            <person name="Goffeau A."/>
            <person name="Grivell L.A."/>
            <person name="Hennemann A."/>
            <person name="Herbert C.J."/>
            <person name="Heumann K."/>
            <person name="Hilger F."/>
            <person name="Hollenberg C.P."/>
            <person name="Huang M.-E."/>
            <person name="Jacq C."/>
            <person name="Jauniaux J.-C."/>
            <person name="Katsoulou C."/>
            <person name="Kirchrath L."/>
            <person name="Kleine K."/>
            <person name="Kordes E."/>
            <person name="Koetter P."/>
            <person name="Liebl S."/>
            <person name="Louis E.J."/>
            <person name="Manus V."/>
            <person name="Mewes H.-W."/>
            <person name="Miosga T."/>
            <person name="Obermaier B."/>
            <person name="Perea J."/>
            <person name="Pohl T.M."/>
            <person name="Portetelle D."/>
            <person name="Pujol A."/>
            <person name="Purnelle B."/>
            <person name="Ramezani Rad M."/>
            <person name="Rasmussen S.W."/>
            <person name="Rose M."/>
            <person name="Rossau R."/>
            <person name="Schaaff-Gerstenschlaeger I."/>
            <person name="Smits P.H.M."/>
            <person name="Scarcez T."/>
            <person name="Soriano N."/>
            <person name="To Van D."/>
            <person name="Tzermia M."/>
            <person name="Van Broekhoven A."/>
            <person name="Vandenbol M."/>
            <person name="Wedler H."/>
            <person name="von Wettstein D."/>
            <person name="Wambutt R."/>
            <person name="Zagulski M."/>
            <person name="Zollner A."/>
            <person name="Karpfinger-Hartl L."/>
        </authorList>
    </citation>
    <scope>NUCLEOTIDE SEQUENCE [LARGE SCALE GENOMIC DNA]</scope>
    <source>
        <strain>ATCC 204508 / S288c</strain>
    </source>
</reference>
<reference key="4">
    <citation type="journal article" date="2014" name="G3 (Bethesda)">
        <title>The reference genome sequence of Saccharomyces cerevisiae: Then and now.</title>
        <authorList>
            <person name="Engel S.R."/>
            <person name="Dietrich F.S."/>
            <person name="Fisk D.G."/>
            <person name="Binkley G."/>
            <person name="Balakrishnan R."/>
            <person name="Costanzo M.C."/>
            <person name="Dwight S.S."/>
            <person name="Hitz B.C."/>
            <person name="Karra K."/>
            <person name="Nash R.S."/>
            <person name="Weng S."/>
            <person name="Wong E.D."/>
            <person name="Lloyd P."/>
            <person name="Skrzypek M.S."/>
            <person name="Miyasato S.R."/>
            <person name="Simison M."/>
            <person name="Cherry J.M."/>
        </authorList>
    </citation>
    <scope>GENOME REANNOTATION</scope>
    <source>
        <strain>ATCC 204508 / S288c</strain>
    </source>
</reference>
<reference key="5">
    <citation type="journal article" date="2007" name="Genome Res.">
        <title>Approaching a complete repository of sequence-verified protein-encoding clones for Saccharomyces cerevisiae.</title>
        <authorList>
            <person name="Hu Y."/>
            <person name="Rolfs A."/>
            <person name="Bhullar B."/>
            <person name="Murthy T.V.S."/>
            <person name="Zhu C."/>
            <person name="Berger M.F."/>
            <person name="Camargo A.A."/>
            <person name="Kelley F."/>
            <person name="McCarron S."/>
            <person name="Jepson D."/>
            <person name="Richardson A."/>
            <person name="Raphael J."/>
            <person name="Moreira D."/>
            <person name="Taycher E."/>
            <person name="Zuo D."/>
            <person name="Mohr S."/>
            <person name="Kane M.F."/>
            <person name="Williamson J."/>
            <person name="Simpson A.J.G."/>
            <person name="Bulyk M.L."/>
            <person name="Harlow E."/>
            <person name="Marsischky G."/>
            <person name="Kolodner R.D."/>
            <person name="LaBaer J."/>
        </authorList>
    </citation>
    <scope>NUCLEOTIDE SEQUENCE [GENOMIC DNA]</scope>
    <source>
        <strain>ATCC 204508 / S288c</strain>
    </source>
</reference>
<reference key="6">
    <citation type="journal article" date="2008" name="Mol. Cell. Proteomics">
        <title>A multidimensional chromatography technology for in-depth phosphoproteome analysis.</title>
        <authorList>
            <person name="Albuquerque C.P."/>
            <person name="Smolka M.B."/>
            <person name="Payne S.H."/>
            <person name="Bafna V."/>
            <person name="Eng J."/>
            <person name="Zhou H."/>
        </authorList>
    </citation>
    <scope>IDENTIFICATION BY MASS SPECTROMETRY [LARGE SCALE ANALYSIS]</scope>
</reference>
<reference key="7">
    <citation type="journal article" date="2002" name="EMBO J.">
        <title>Localization of the yeast RNA polymerase I-specific subunits.</title>
        <authorList>
            <person name="Bischler N."/>
            <person name="Brino L."/>
            <person name="Carles C."/>
            <person name="Riva M."/>
            <person name="Tschochner H."/>
            <person name="Mallouh V."/>
            <person name="Schultz P."/>
        </authorList>
    </citation>
    <scope>ELECTRON MICROSCOPY OF THE RNA POLYMERASE I COMPLEX</scope>
</reference>
<reference key="8">
    <citation type="journal article" date="2002" name="Mol. Microbiol.">
        <title>Rpa12p, a conserved RNA polymerase I subunit with two functional domains.</title>
        <authorList>
            <person name="Van Mullem V."/>
            <person name="Landrieux E."/>
            <person name="Vandenhaute J."/>
            <person name="Thuriaux P."/>
        </authorList>
    </citation>
    <scope>IDENTIFICATION IN THE RNA POL I COMPLEX</scope>
    <scope>SUBCELLULAR LOCATION</scope>
    <scope>INTERACTION WITH RPA2</scope>
    <scope>MUTAGENESIS OF CYS-10; CYS-13; CYS-30 AND CYS-33</scope>
</reference>
<reference key="9">
    <citation type="journal article" date="2002" name="Proc. Natl. Acad. Sci. U.S.A.">
        <title>The A14-A43 heterodimer subunit in yeast RNA pol I and their relationship to Rpb4-Rpb7 pol II subunits.</title>
        <authorList>
            <person name="Peyroche G."/>
            <person name="Levillain E."/>
            <person name="Siaut M."/>
            <person name="Callebaut I."/>
            <person name="Schultz P."/>
            <person name="Sentenac A."/>
            <person name="Riva M."/>
            <person name="Carles C."/>
        </authorList>
    </citation>
    <scope>IDENTIFICATION IN THE RNA POL I COMPLEX</scope>
</reference>
<reference key="10">
    <citation type="journal article" date="2003" name="Nature">
        <title>Global analysis of protein localization in budding yeast.</title>
        <authorList>
            <person name="Huh W.-K."/>
            <person name="Falvo J.V."/>
            <person name="Gerke L.C."/>
            <person name="Carroll A.S."/>
            <person name="Howson R.W."/>
            <person name="Weissman J.S."/>
            <person name="O'Shea E.K."/>
        </authorList>
    </citation>
    <scope>SUBCELLULAR LOCATION [LARGE SCALE ANALYSIS]</scope>
</reference>
<reference key="11">
    <citation type="journal article" date="2003" name="Nature">
        <title>Global analysis of protein expression in yeast.</title>
        <authorList>
            <person name="Ghaemmaghami S."/>
            <person name="Huh W.-K."/>
            <person name="Bower K."/>
            <person name="Howson R.W."/>
            <person name="Belle A."/>
            <person name="Dephoure N."/>
            <person name="O'Shea E.K."/>
            <person name="Weissman J.S."/>
        </authorList>
    </citation>
    <scope>LEVEL OF PROTEIN EXPRESSION [LARGE SCALE ANALYSIS]</scope>
</reference>
<reference key="12">
    <citation type="journal article" date="2004" name="Proc. Natl. Acad. Sci. U.S.A.">
        <title>Transcriptional termination by RNA polymerase I requires the small subunit Rpa12p.</title>
        <authorList>
            <person name="Prescott E.M."/>
            <person name="Osheim Y.N."/>
            <person name="Jones H.S."/>
            <person name="Alen C.M."/>
            <person name="Roan J.G."/>
            <person name="Reeder R.H."/>
            <person name="Beyer A.L."/>
            <person name="Proudfoot N.J."/>
        </authorList>
    </citation>
    <scope>FUNCTION</scope>
</reference>
<reference key="13">
    <citation type="journal article" date="2007" name="Cell">
        <title>Functional architecture of RNA polymerase I.</title>
        <authorList>
            <person name="Kuhn C.D."/>
            <person name="Geiger S.R."/>
            <person name="Baumli S."/>
            <person name="Gartmann M."/>
            <person name="Gerber J."/>
            <person name="Jennebach S."/>
            <person name="Mielke T."/>
            <person name="Tschochner H."/>
            <person name="Beckmann R."/>
            <person name="Cramer P."/>
        </authorList>
    </citation>
    <scope>STRUCTURE BY ELECTRON MICROSCOPY (12.00 ANGSTROMS) OF THE POL I COMPLEX</scope>
    <scope>FUNCTION IN RNA CLEAVAGE</scope>
    <scope>REGION</scope>
    <scope>SUBUNIT</scope>
</reference>
<reference key="14">
    <citation type="journal article" date="2013" name="Nature">
        <title>Crystal structure of the 14-subunit RNA polymerase I.</title>
        <authorList>
            <person name="Fernandez-Tornero C."/>
            <person name="Moreno-Morcillo M."/>
            <person name="Rashid U.J."/>
            <person name="Taylor N.M."/>
            <person name="Ruiz F.M."/>
            <person name="Gruene T."/>
            <person name="Legrand P."/>
            <person name="Steuerwald U."/>
            <person name="Muller C.W."/>
        </authorList>
    </citation>
    <scope>X-RAY CRYSTALLOGRAPHY (3.0 ANGSTROMS) OF THE POL I COMPLEX IN COMPLEX WITH ZINC IONS</scope>
    <scope>FUNCTION</scope>
    <scope>ZINC-BINDING</scope>
    <scope>SUBUNIT</scope>
    <scope>ZINC FINGER DOMAIN</scope>
</reference>
<reference key="15">
    <citation type="journal article" date="2013" name="Nature">
        <title>RNA polymerase I structure and transcription regulation.</title>
        <authorList>
            <person name="Engel C."/>
            <person name="Sainsbury S."/>
            <person name="Cheung A.C."/>
            <person name="Kostrewa D."/>
            <person name="Cramer P."/>
        </authorList>
    </citation>
    <scope>X-RAY CRYSTALLOGRAPHY (2.8 ANGSTROMS) OF THE POL I COMPLEX IN COMPLEX WITH ZINC IONS</scope>
    <scope>FUNCTION</scope>
    <scope>ZINC-BINDING</scope>
    <scope>SUBUNIT</scope>
    <scope>ZINC FINGER DOMAIN</scope>
</reference>
<gene>
    <name type="primary">RPA12</name>
    <name type="synonym">RRN4</name>
    <name type="ordered locus">YJR063W</name>
    <name type="ORF">J1747</name>
</gene>
<proteinExistence type="evidence at protein level"/>
<protein>
    <recommendedName>
        <fullName>DNA-directed RNA polymerase I subunit RPA12</fullName>
    </recommendedName>
    <alternativeName>
        <fullName>A12</fullName>
    </alternativeName>
    <alternativeName>
        <fullName>A12.2</fullName>
    </alternativeName>
    <alternativeName>
        <fullName>DNA-directed RNA polymerase I 13.7 kDa polypeptide</fullName>
    </alternativeName>
</protein>
<evidence type="ECO:0000255" key="1">
    <source>
        <dbReference type="PROSITE-ProRule" id="PRU00472"/>
    </source>
</evidence>
<evidence type="ECO:0000255" key="2">
    <source>
        <dbReference type="PROSITE-ProRule" id="PRU10145"/>
    </source>
</evidence>
<evidence type="ECO:0000269" key="3">
    <source>
    </source>
</evidence>
<evidence type="ECO:0000269" key="4">
    <source>
    </source>
</evidence>
<evidence type="ECO:0000269" key="5">
    <source>
    </source>
</evidence>
<evidence type="ECO:0000269" key="6">
    <source>
    </source>
</evidence>
<evidence type="ECO:0000269" key="7">
    <source>
    </source>
</evidence>
<evidence type="ECO:0000269" key="8">
    <source>
    </source>
</evidence>
<evidence type="ECO:0000269" key="9">
    <source>
    </source>
</evidence>
<evidence type="ECO:0000269" key="10">
    <source>
    </source>
</evidence>
<evidence type="ECO:0000305" key="11"/>
<evidence type="ECO:0007829" key="12">
    <source>
        <dbReference type="PDB" id="4C2M"/>
    </source>
</evidence>
<evidence type="ECO:0007829" key="13">
    <source>
        <dbReference type="PDB" id="6RUI"/>
    </source>
</evidence>
<evidence type="ECO:0007829" key="14">
    <source>
        <dbReference type="PDB" id="6RUO"/>
    </source>
</evidence>
<evidence type="ECO:0007829" key="15">
    <source>
        <dbReference type="PDB" id="6RWE"/>
    </source>
</evidence>